<organismHost>
    <name type="scientific">Ornithodoros</name>
    <name type="common">relapsing fever ticks</name>
    <dbReference type="NCBI Taxonomy" id="6937"/>
</organismHost>
<organismHost>
    <name type="scientific">Phacochoerus aethiopicus</name>
    <name type="common">Warthog</name>
    <dbReference type="NCBI Taxonomy" id="85517"/>
</organismHost>
<organismHost>
    <name type="scientific">Phacochoerus africanus</name>
    <name type="common">Warthog</name>
    <dbReference type="NCBI Taxonomy" id="41426"/>
</organismHost>
<organismHost>
    <name type="scientific">Potamochoerus larvatus</name>
    <name type="common">Bushpig</name>
    <dbReference type="NCBI Taxonomy" id="273792"/>
</organismHost>
<organismHost>
    <name type="scientific">Sus scrofa</name>
    <name type="common">Pig</name>
    <dbReference type="NCBI Taxonomy" id="9823"/>
</organismHost>
<protein>
    <recommendedName>
        <fullName evidence="2">DNA-directed RNA polymerase RPB7 homolog</fullName>
        <shortName evidence="3">RPB7 homolog</shortName>
    </recommendedName>
</protein>
<accession>P0CAE8</accession>
<reference key="1">
    <citation type="submission" date="2003-03" db="EMBL/GenBank/DDBJ databases">
        <title>African swine fever virus genomes.</title>
        <authorList>
            <person name="Kutish G.F."/>
            <person name="Rock D.L."/>
        </authorList>
    </citation>
    <scope>NUCLEOTIDE SEQUENCE [GENOMIC DNA]</scope>
</reference>
<gene>
    <name type="ordered locus">Pret-117</name>
</gene>
<proteinExistence type="inferred from homology"/>
<sequence>MIDQKIFETTLNIDDPTNFCTNVEAHLLKELENIYVGKCFKNSFILNITGIIQRSPCFIMRTNNSGRGYMHVRFSALVSYLNAFDLIAAVKIIKNDSNIILGESLLTEPVTIVIPSSESQNNVAEVGQIVPVQLANSSVYYIPGRQQASATGSIFIPKHTFSVYHVQEELTQEQALNLTKLVNIIEMLLESRSKKDFKQICFFEKLYYTYSISSDEILDLKIWKGPKGKEMSRLKPCNVLSFLYDALKNKSSSLGFWARPPNLFKSSPLAYQQDQNSFNATELPIICSAEVMFVTLLKEIINYLQFMNDLCDTFNNEQLIKRHENIWMLIEQRKIGHDF</sequence>
<comment type="function">
    <text evidence="1">Component of the DNA-directed RNA polymerase (RNAP) that catalyzes the transcription in the cytoplasm of viral DNA into RNA using the four ribonucleoside triphosphates as substrates.</text>
</comment>
<comment type="subunit">
    <text evidence="2">Part of the viral DNA-directed RNA polymerase that consists of 8 polII-like subunits (RPB1, RPB2, RPB3, RPB5, RPB6, RPB7, RPB9, RPB10), a capping enzyme and a termination factor.</text>
</comment>
<comment type="subcellular location">
    <subcellularLocation>
        <location evidence="3">Host cytoplasm</location>
    </subcellularLocation>
    <subcellularLocation>
        <location evidence="2">Virion</location>
    </subcellularLocation>
    <text evidence="2">Found in association with viral nucleoid.</text>
</comment>
<comment type="induction">
    <text evidence="2">Expressed in the early phase of the viral replicative cycle.</text>
</comment>
<comment type="domain">
    <text evidence="2">Contains an extended C-terminus, with no homology to characterized proteins.</text>
</comment>
<comment type="similarity">
    <text evidence="3">Belongs to the asfivirus D339L family.</text>
</comment>
<name>RPB7_ASFP4</name>
<dbReference type="EMBL" id="AY261363">
    <property type="status" value="NOT_ANNOTATED_CDS"/>
    <property type="molecule type" value="Genomic_DNA"/>
</dbReference>
<dbReference type="SMR" id="P0CAE8"/>
<dbReference type="Proteomes" id="UP000000859">
    <property type="component" value="Segment"/>
</dbReference>
<dbReference type="GO" id="GO:0000428">
    <property type="term" value="C:DNA-directed RNA polymerase complex"/>
    <property type="evidence" value="ECO:0007669"/>
    <property type="project" value="UniProtKB-KW"/>
</dbReference>
<dbReference type="GO" id="GO:0030430">
    <property type="term" value="C:host cell cytoplasm"/>
    <property type="evidence" value="ECO:0007669"/>
    <property type="project" value="UniProtKB-SubCell"/>
</dbReference>
<dbReference type="GO" id="GO:0044423">
    <property type="term" value="C:virion component"/>
    <property type="evidence" value="ECO:0007669"/>
    <property type="project" value="UniProtKB-KW"/>
</dbReference>
<dbReference type="GO" id="GO:0019083">
    <property type="term" value="P:viral transcription"/>
    <property type="evidence" value="ECO:0007669"/>
    <property type="project" value="UniProtKB-KW"/>
</dbReference>
<feature type="chain" id="PRO_0000373656" description="DNA-directed RNA polymerase RPB7 homolog">
    <location>
        <begin position="1"/>
        <end position="339"/>
    </location>
</feature>
<organism>
    <name type="scientific">African swine fever virus (isolate Tick/South Africa/Pretoriuskop Pr4/1996)</name>
    <name type="common">ASFV</name>
    <dbReference type="NCBI Taxonomy" id="561443"/>
    <lineage>
        <taxon>Viruses</taxon>
        <taxon>Varidnaviria</taxon>
        <taxon>Bamfordvirae</taxon>
        <taxon>Nucleocytoviricota</taxon>
        <taxon>Pokkesviricetes</taxon>
        <taxon>Asfuvirales</taxon>
        <taxon>Asfarviridae</taxon>
        <taxon>Asfivirus</taxon>
        <taxon>African swine fever virus</taxon>
    </lineage>
</organism>
<evidence type="ECO:0000250" key="1">
    <source>
        <dbReference type="UniProtKB" id="P62487"/>
    </source>
</evidence>
<evidence type="ECO:0000250" key="2">
    <source>
        <dbReference type="UniProtKB" id="Q89907"/>
    </source>
</evidence>
<evidence type="ECO:0000305" key="3"/>
<keyword id="KW-0240">DNA-directed RNA polymerase</keyword>
<keyword id="KW-0244">Early protein</keyword>
<keyword id="KW-1035">Host cytoplasm</keyword>
<keyword id="KW-0804">Transcription</keyword>
<keyword id="KW-1195">Viral transcription</keyword>
<keyword id="KW-0946">Virion</keyword>